<feature type="chain" id="PRO_0000182825" description="Deoxyuridine 5'-triphosphate nucleotidohydrolase">
    <location>
        <begin position="1"/>
        <end position="144"/>
    </location>
</feature>
<feature type="binding site" evidence="1">
    <location>
        <begin position="63"/>
        <end position="65"/>
    </location>
    <ligand>
        <name>substrate</name>
    </ligand>
</feature>
<feature type="binding site" evidence="1">
    <location>
        <position position="76"/>
    </location>
    <ligand>
        <name>substrate</name>
    </ligand>
</feature>
<feature type="binding site" evidence="1">
    <location>
        <begin position="80"/>
        <end position="82"/>
    </location>
    <ligand>
        <name>substrate</name>
    </ligand>
</feature>
<dbReference type="EC" id="3.6.1.23" evidence="1"/>
<dbReference type="EMBL" id="AP006841">
    <property type="protein sequence ID" value="BAD47073.1"/>
    <property type="molecule type" value="Genomic_DNA"/>
</dbReference>
<dbReference type="RefSeq" id="WP_005784036.1">
    <property type="nucleotide sequence ID" value="NZ_UYXF01000014.1"/>
</dbReference>
<dbReference type="RefSeq" id="YP_097607.1">
    <property type="nucleotide sequence ID" value="NC_006347.1"/>
</dbReference>
<dbReference type="SMR" id="Q64ZK3"/>
<dbReference type="STRING" id="295405.BF0324"/>
<dbReference type="GeneID" id="60367390"/>
<dbReference type="KEGG" id="bfr:BF0324"/>
<dbReference type="PATRIC" id="fig|295405.11.peg.347"/>
<dbReference type="HOGENOM" id="CLU_068508_1_2_10"/>
<dbReference type="OrthoDB" id="9809956at2"/>
<dbReference type="UniPathway" id="UPA00610">
    <property type="reaction ID" value="UER00666"/>
</dbReference>
<dbReference type="Proteomes" id="UP000002197">
    <property type="component" value="Chromosome"/>
</dbReference>
<dbReference type="GO" id="GO:0004170">
    <property type="term" value="F:dUTP diphosphatase activity"/>
    <property type="evidence" value="ECO:0007669"/>
    <property type="project" value="UniProtKB-UniRule"/>
</dbReference>
<dbReference type="GO" id="GO:0000287">
    <property type="term" value="F:magnesium ion binding"/>
    <property type="evidence" value="ECO:0007669"/>
    <property type="project" value="UniProtKB-UniRule"/>
</dbReference>
<dbReference type="GO" id="GO:0006226">
    <property type="term" value="P:dUMP biosynthetic process"/>
    <property type="evidence" value="ECO:0007669"/>
    <property type="project" value="UniProtKB-UniRule"/>
</dbReference>
<dbReference type="GO" id="GO:0046081">
    <property type="term" value="P:dUTP catabolic process"/>
    <property type="evidence" value="ECO:0007669"/>
    <property type="project" value="InterPro"/>
</dbReference>
<dbReference type="CDD" id="cd07557">
    <property type="entry name" value="trimeric_dUTPase"/>
    <property type="match status" value="1"/>
</dbReference>
<dbReference type="FunFam" id="2.70.40.10:FF:000002">
    <property type="entry name" value="dUTP diphosphatase"/>
    <property type="match status" value="1"/>
</dbReference>
<dbReference type="Gene3D" id="2.70.40.10">
    <property type="match status" value="1"/>
</dbReference>
<dbReference type="HAMAP" id="MF_00116">
    <property type="entry name" value="dUTPase_bact"/>
    <property type="match status" value="1"/>
</dbReference>
<dbReference type="InterPro" id="IPR008181">
    <property type="entry name" value="dUTPase"/>
</dbReference>
<dbReference type="InterPro" id="IPR029054">
    <property type="entry name" value="dUTPase-like"/>
</dbReference>
<dbReference type="InterPro" id="IPR036157">
    <property type="entry name" value="dUTPase-like_sf"/>
</dbReference>
<dbReference type="InterPro" id="IPR033704">
    <property type="entry name" value="dUTPase_trimeric"/>
</dbReference>
<dbReference type="NCBIfam" id="TIGR00576">
    <property type="entry name" value="dut"/>
    <property type="match status" value="1"/>
</dbReference>
<dbReference type="NCBIfam" id="NF001862">
    <property type="entry name" value="PRK00601.1"/>
    <property type="match status" value="1"/>
</dbReference>
<dbReference type="PANTHER" id="PTHR11241">
    <property type="entry name" value="DEOXYURIDINE 5'-TRIPHOSPHATE NUCLEOTIDOHYDROLASE"/>
    <property type="match status" value="1"/>
</dbReference>
<dbReference type="PANTHER" id="PTHR11241:SF0">
    <property type="entry name" value="DEOXYURIDINE 5'-TRIPHOSPHATE NUCLEOTIDOHYDROLASE"/>
    <property type="match status" value="1"/>
</dbReference>
<dbReference type="Pfam" id="PF00692">
    <property type="entry name" value="dUTPase"/>
    <property type="match status" value="1"/>
</dbReference>
<dbReference type="SUPFAM" id="SSF51283">
    <property type="entry name" value="dUTPase-like"/>
    <property type="match status" value="1"/>
</dbReference>
<reference key="1">
    <citation type="journal article" date="2004" name="Proc. Natl. Acad. Sci. U.S.A.">
        <title>Genomic analysis of Bacteroides fragilis reveals extensive DNA inversions regulating cell surface adaptation.</title>
        <authorList>
            <person name="Kuwahara T."/>
            <person name="Yamashita A."/>
            <person name="Hirakawa H."/>
            <person name="Nakayama H."/>
            <person name="Toh H."/>
            <person name="Okada N."/>
            <person name="Kuhara S."/>
            <person name="Hattori M."/>
            <person name="Hayashi T."/>
            <person name="Ohnishi Y."/>
        </authorList>
    </citation>
    <scope>NUCLEOTIDE SEQUENCE [LARGE SCALE GENOMIC DNA]</scope>
    <source>
        <strain>YCH46</strain>
    </source>
</reference>
<sequence length="144" mass="15608">MNIQVINKSKHPLPAYATELSAGMDIRANISEPISLAPMQRCLVPTGLFIALPQGFEAQIRPRSGLALKKGITVLNSPGTIDADYRGEICIILVNLSAETFVIEDGERIAQMVIARHEQAVWKEVEVLDETERGAGGFGHTGRG</sequence>
<proteinExistence type="inferred from homology"/>
<keyword id="KW-0378">Hydrolase</keyword>
<keyword id="KW-0460">Magnesium</keyword>
<keyword id="KW-0479">Metal-binding</keyword>
<keyword id="KW-0546">Nucleotide metabolism</keyword>
<gene>
    <name evidence="1" type="primary">dut</name>
    <name type="ordered locus">BF0324</name>
</gene>
<name>DUT_BACFR</name>
<evidence type="ECO:0000255" key="1">
    <source>
        <dbReference type="HAMAP-Rule" id="MF_00116"/>
    </source>
</evidence>
<accession>Q64ZK3</accession>
<comment type="function">
    <text evidence="1">This enzyme is involved in nucleotide metabolism: it produces dUMP, the immediate precursor of thymidine nucleotides and it decreases the intracellular concentration of dUTP so that uracil cannot be incorporated into DNA.</text>
</comment>
<comment type="catalytic activity">
    <reaction evidence="1">
        <text>dUTP + H2O = dUMP + diphosphate + H(+)</text>
        <dbReference type="Rhea" id="RHEA:10248"/>
        <dbReference type="ChEBI" id="CHEBI:15377"/>
        <dbReference type="ChEBI" id="CHEBI:15378"/>
        <dbReference type="ChEBI" id="CHEBI:33019"/>
        <dbReference type="ChEBI" id="CHEBI:61555"/>
        <dbReference type="ChEBI" id="CHEBI:246422"/>
        <dbReference type="EC" id="3.6.1.23"/>
    </reaction>
</comment>
<comment type="cofactor">
    <cofactor evidence="1">
        <name>Mg(2+)</name>
        <dbReference type="ChEBI" id="CHEBI:18420"/>
    </cofactor>
</comment>
<comment type="pathway">
    <text evidence="1">Pyrimidine metabolism; dUMP biosynthesis; dUMP from dCTP (dUTP route): step 2/2.</text>
</comment>
<comment type="similarity">
    <text evidence="1">Belongs to the dUTPase family.</text>
</comment>
<organism>
    <name type="scientific">Bacteroides fragilis (strain YCH46)</name>
    <dbReference type="NCBI Taxonomy" id="295405"/>
    <lineage>
        <taxon>Bacteria</taxon>
        <taxon>Pseudomonadati</taxon>
        <taxon>Bacteroidota</taxon>
        <taxon>Bacteroidia</taxon>
        <taxon>Bacteroidales</taxon>
        <taxon>Bacteroidaceae</taxon>
        <taxon>Bacteroides</taxon>
    </lineage>
</organism>
<protein>
    <recommendedName>
        <fullName evidence="1">Deoxyuridine 5'-triphosphate nucleotidohydrolase</fullName>
        <shortName evidence="1">dUTPase</shortName>
        <ecNumber evidence="1">3.6.1.23</ecNumber>
    </recommendedName>
    <alternativeName>
        <fullName evidence="1">dUTP pyrophosphatase</fullName>
    </alternativeName>
</protein>